<organism>
    <name type="scientific">Aeromonas salmonicida (strain A449)</name>
    <dbReference type="NCBI Taxonomy" id="382245"/>
    <lineage>
        <taxon>Bacteria</taxon>
        <taxon>Pseudomonadati</taxon>
        <taxon>Pseudomonadota</taxon>
        <taxon>Gammaproteobacteria</taxon>
        <taxon>Aeromonadales</taxon>
        <taxon>Aeromonadaceae</taxon>
        <taxon>Aeromonas</taxon>
    </lineage>
</organism>
<keyword id="KW-0413">Isomerase</keyword>
<gene>
    <name evidence="1" type="primary">rpiA</name>
    <name type="ordered locus">ASA_1642</name>
</gene>
<name>RPIA_AERS4</name>
<proteinExistence type="inferred from homology"/>
<reference key="1">
    <citation type="journal article" date="2008" name="BMC Genomics">
        <title>The genome of Aeromonas salmonicida subsp. salmonicida A449: insights into the evolution of a fish pathogen.</title>
        <authorList>
            <person name="Reith M.E."/>
            <person name="Singh R.K."/>
            <person name="Curtis B."/>
            <person name="Boyd J.M."/>
            <person name="Bouevitch A."/>
            <person name="Kimball J."/>
            <person name="Munholland J."/>
            <person name="Murphy C."/>
            <person name="Sarty D."/>
            <person name="Williams J."/>
            <person name="Nash J.H."/>
            <person name="Johnson S.C."/>
            <person name="Brown L.L."/>
        </authorList>
    </citation>
    <scope>NUCLEOTIDE SEQUENCE [LARGE SCALE GENOMIC DNA]</scope>
    <source>
        <strain>A449</strain>
    </source>
</reference>
<sequence>MTQDEMKKAAGWAALKYVVPGTIVGVGTGSTVNHFIDALATMKDQINGAVSSSIASTERLKEFGINVYDLNDIDALSVYVDGADEINASRDMIKGGGAALTREKIVAAVADKFICIIDNTKTVDVLGQFPLPVEVIPMAREYVAREIRKLGGNPEWREGVVTDNGNIILDVKGMAIKDAKALEVQLNGIVGVVTNGLFAHRGADVVLIGTPDGVITQ</sequence>
<accession>A4SLF3</accession>
<evidence type="ECO:0000255" key="1">
    <source>
        <dbReference type="HAMAP-Rule" id="MF_00170"/>
    </source>
</evidence>
<protein>
    <recommendedName>
        <fullName evidence="1">Ribose-5-phosphate isomerase A</fullName>
        <ecNumber evidence="1">5.3.1.6</ecNumber>
    </recommendedName>
    <alternativeName>
        <fullName evidence="1">Phosphoriboisomerase A</fullName>
        <shortName evidence="1">PRI</shortName>
    </alternativeName>
</protein>
<dbReference type="EC" id="5.3.1.6" evidence="1"/>
<dbReference type="EMBL" id="CP000644">
    <property type="protein sequence ID" value="ABO89725.1"/>
    <property type="molecule type" value="Genomic_DNA"/>
</dbReference>
<dbReference type="RefSeq" id="WP_005314623.1">
    <property type="nucleotide sequence ID" value="NC_009348.1"/>
</dbReference>
<dbReference type="SMR" id="A4SLF3"/>
<dbReference type="STRING" id="29491.GCA_000820065_00401"/>
<dbReference type="GeneID" id="79879305"/>
<dbReference type="KEGG" id="asa:ASA_1642"/>
<dbReference type="eggNOG" id="COG0120">
    <property type="taxonomic scope" value="Bacteria"/>
</dbReference>
<dbReference type="HOGENOM" id="CLU_056590_1_1_6"/>
<dbReference type="UniPathway" id="UPA00115">
    <property type="reaction ID" value="UER00412"/>
</dbReference>
<dbReference type="Proteomes" id="UP000000225">
    <property type="component" value="Chromosome"/>
</dbReference>
<dbReference type="GO" id="GO:0005829">
    <property type="term" value="C:cytosol"/>
    <property type="evidence" value="ECO:0007669"/>
    <property type="project" value="TreeGrafter"/>
</dbReference>
<dbReference type="GO" id="GO:0004751">
    <property type="term" value="F:ribose-5-phosphate isomerase activity"/>
    <property type="evidence" value="ECO:0007669"/>
    <property type="project" value="UniProtKB-UniRule"/>
</dbReference>
<dbReference type="GO" id="GO:0006014">
    <property type="term" value="P:D-ribose metabolic process"/>
    <property type="evidence" value="ECO:0007669"/>
    <property type="project" value="TreeGrafter"/>
</dbReference>
<dbReference type="GO" id="GO:0009052">
    <property type="term" value="P:pentose-phosphate shunt, non-oxidative branch"/>
    <property type="evidence" value="ECO:0007669"/>
    <property type="project" value="UniProtKB-UniRule"/>
</dbReference>
<dbReference type="CDD" id="cd01398">
    <property type="entry name" value="RPI_A"/>
    <property type="match status" value="1"/>
</dbReference>
<dbReference type="FunFam" id="3.30.70.260:FF:000004">
    <property type="entry name" value="Ribose-5-phosphate isomerase A"/>
    <property type="match status" value="1"/>
</dbReference>
<dbReference type="FunFam" id="3.40.50.1360:FF:000001">
    <property type="entry name" value="Ribose-5-phosphate isomerase A"/>
    <property type="match status" value="1"/>
</dbReference>
<dbReference type="Gene3D" id="3.30.70.260">
    <property type="match status" value="1"/>
</dbReference>
<dbReference type="Gene3D" id="3.40.50.1360">
    <property type="match status" value="1"/>
</dbReference>
<dbReference type="HAMAP" id="MF_00170">
    <property type="entry name" value="Rib_5P_isom_A"/>
    <property type="match status" value="1"/>
</dbReference>
<dbReference type="InterPro" id="IPR037171">
    <property type="entry name" value="NagB/RpiA_transferase-like"/>
</dbReference>
<dbReference type="InterPro" id="IPR020672">
    <property type="entry name" value="Ribose5P_isomerase_typA_subgr"/>
</dbReference>
<dbReference type="InterPro" id="IPR004788">
    <property type="entry name" value="Ribose5P_isomerase_type_A"/>
</dbReference>
<dbReference type="NCBIfam" id="NF001924">
    <property type="entry name" value="PRK00702.1"/>
    <property type="match status" value="1"/>
</dbReference>
<dbReference type="NCBIfam" id="TIGR00021">
    <property type="entry name" value="rpiA"/>
    <property type="match status" value="1"/>
</dbReference>
<dbReference type="PANTHER" id="PTHR11934">
    <property type="entry name" value="RIBOSE-5-PHOSPHATE ISOMERASE"/>
    <property type="match status" value="1"/>
</dbReference>
<dbReference type="PANTHER" id="PTHR11934:SF0">
    <property type="entry name" value="RIBOSE-5-PHOSPHATE ISOMERASE"/>
    <property type="match status" value="1"/>
</dbReference>
<dbReference type="Pfam" id="PF06026">
    <property type="entry name" value="Rib_5-P_isom_A"/>
    <property type="match status" value="1"/>
</dbReference>
<dbReference type="SUPFAM" id="SSF75445">
    <property type="entry name" value="D-ribose-5-phosphate isomerase (RpiA), lid domain"/>
    <property type="match status" value="1"/>
</dbReference>
<dbReference type="SUPFAM" id="SSF100950">
    <property type="entry name" value="NagB/RpiA/CoA transferase-like"/>
    <property type="match status" value="1"/>
</dbReference>
<comment type="function">
    <text evidence="1">Catalyzes the reversible conversion of ribose-5-phosphate to ribulose 5-phosphate.</text>
</comment>
<comment type="catalytic activity">
    <reaction evidence="1">
        <text>aldehydo-D-ribose 5-phosphate = D-ribulose 5-phosphate</text>
        <dbReference type="Rhea" id="RHEA:14657"/>
        <dbReference type="ChEBI" id="CHEBI:58121"/>
        <dbReference type="ChEBI" id="CHEBI:58273"/>
        <dbReference type="EC" id="5.3.1.6"/>
    </reaction>
</comment>
<comment type="pathway">
    <text evidence="1">Carbohydrate degradation; pentose phosphate pathway; D-ribose 5-phosphate from D-ribulose 5-phosphate (non-oxidative stage): step 1/1.</text>
</comment>
<comment type="subunit">
    <text evidence="1">Homodimer.</text>
</comment>
<comment type="similarity">
    <text evidence="1">Belongs to the ribose 5-phosphate isomerase family.</text>
</comment>
<feature type="chain" id="PRO_1000016897" description="Ribose-5-phosphate isomerase A">
    <location>
        <begin position="1"/>
        <end position="217"/>
    </location>
</feature>
<feature type="active site" description="Proton acceptor" evidence="1">
    <location>
        <position position="103"/>
    </location>
</feature>
<feature type="binding site" evidence="1">
    <location>
        <begin position="28"/>
        <end position="31"/>
    </location>
    <ligand>
        <name>substrate</name>
    </ligand>
</feature>
<feature type="binding site" evidence="1">
    <location>
        <begin position="81"/>
        <end position="84"/>
    </location>
    <ligand>
        <name>substrate</name>
    </ligand>
</feature>
<feature type="binding site" evidence="1">
    <location>
        <begin position="94"/>
        <end position="97"/>
    </location>
    <ligand>
        <name>substrate</name>
    </ligand>
</feature>
<feature type="binding site" evidence="1">
    <location>
        <position position="121"/>
    </location>
    <ligand>
        <name>substrate</name>
    </ligand>
</feature>